<keyword id="KW-0066">ATP synthesis</keyword>
<keyword id="KW-0138">CF(0)</keyword>
<keyword id="KW-0150">Chloroplast</keyword>
<keyword id="KW-0375">Hydrogen ion transport</keyword>
<keyword id="KW-0406">Ion transport</keyword>
<keyword id="KW-0472">Membrane</keyword>
<keyword id="KW-0934">Plastid</keyword>
<keyword id="KW-0793">Thylakoid</keyword>
<keyword id="KW-0812">Transmembrane</keyword>
<keyword id="KW-1133">Transmembrane helix</keyword>
<keyword id="KW-0813">Transport</keyword>
<reference key="1">
    <citation type="submission" date="2007-03" db="EMBL/GenBank/DDBJ databases">
        <title>Sequence analysis of Arabidopsis pumila JS2 chloroplast DNA.</title>
        <authorList>
            <person name="Hosouchi T."/>
            <person name="Tsuruoka H."/>
            <person name="Kotani H."/>
        </authorList>
    </citation>
    <scope>NUCLEOTIDE SEQUENCE [LARGE SCALE GENOMIC DNA]</scope>
</reference>
<geneLocation type="chloroplast"/>
<sequence>MNVLSCSINTLIKEGLYEISGVEVGQHFYWQIGGFQVHAQVLITSWVVIAILLGSSVLAIRNPQTIPTDGQNFFEFVLEFIRDVSKTQIGEEYGPWVPFIGTLFLFIFVSNWSGALLPWKIIQLPQGELAAPTNDINTTVALALLTSVAYFYAGLSKKGLGYFSKYIQPTPILLPINILEDFTKPLSLSFRLFGNILADELVVVVLVSLVPLVVPIPVMFLGLFTSGIQALIFATLAAAYIGESMEGHH</sequence>
<proteinExistence type="inferred from homology"/>
<name>ATPI_OLIPU</name>
<comment type="function">
    <text evidence="1">Key component of the proton channel; it plays a direct role in the translocation of protons across the membrane.</text>
</comment>
<comment type="subunit">
    <text evidence="1">F-type ATPases have 2 components, CF(1) - the catalytic core - and CF(0) - the membrane proton channel. CF(1) has five subunits: alpha(3), beta(3), gamma(1), delta(1), epsilon(1). CF(0) has four main subunits: a, b, b' and c.</text>
</comment>
<comment type="subcellular location">
    <subcellularLocation>
        <location evidence="1">Plastid</location>
        <location evidence="1">Chloroplast thylakoid membrane</location>
        <topology evidence="1">Multi-pass membrane protein</topology>
    </subcellularLocation>
</comment>
<comment type="similarity">
    <text evidence="1">Belongs to the ATPase A chain family.</text>
</comment>
<organism>
    <name type="scientific">Olimarabidopsis pumila</name>
    <name type="common">Dwarf rocket</name>
    <name type="synonym">Arabidopsis griffithiana</name>
    <dbReference type="NCBI Taxonomy" id="74718"/>
    <lineage>
        <taxon>Eukaryota</taxon>
        <taxon>Viridiplantae</taxon>
        <taxon>Streptophyta</taxon>
        <taxon>Embryophyta</taxon>
        <taxon>Tracheophyta</taxon>
        <taxon>Spermatophyta</taxon>
        <taxon>Magnoliopsida</taxon>
        <taxon>eudicotyledons</taxon>
        <taxon>Gunneridae</taxon>
        <taxon>Pentapetalae</taxon>
        <taxon>rosids</taxon>
        <taxon>malvids</taxon>
        <taxon>Brassicales</taxon>
        <taxon>Brassicaceae</taxon>
        <taxon>Alyssopsideae</taxon>
        <taxon>Olimarabidopsis</taxon>
    </lineage>
</organism>
<dbReference type="EMBL" id="AP009368">
    <property type="protein sequence ID" value="BAF49927.1"/>
    <property type="molecule type" value="Genomic_DNA"/>
</dbReference>
<dbReference type="RefSeq" id="YP_001123103.1">
    <property type="nucleotide sequence ID" value="NC_009267.1"/>
</dbReference>
<dbReference type="SMR" id="A4QJS1"/>
<dbReference type="GeneID" id="4962427"/>
<dbReference type="GO" id="GO:0009535">
    <property type="term" value="C:chloroplast thylakoid membrane"/>
    <property type="evidence" value="ECO:0007669"/>
    <property type="project" value="UniProtKB-SubCell"/>
</dbReference>
<dbReference type="GO" id="GO:0005886">
    <property type="term" value="C:plasma membrane"/>
    <property type="evidence" value="ECO:0007669"/>
    <property type="project" value="UniProtKB-UniRule"/>
</dbReference>
<dbReference type="GO" id="GO:0045259">
    <property type="term" value="C:proton-transporting ATP synthase complex"/>
    <property type="evidence" value="ECO:0007669"/>
    <property type="project" value="UniProtKB-KW"/>
</dbReference>
<dbReference type="GO" id="GO:0046933">
    <property type="term" value="F:proton-transporting ATP synthase activity, rotational mechanism"/>
    <property type="evidence" value="ECO:0007669"/>
    <property type="project" value="UniProtKB-UniRule"/>
</dbReference>
<dbReference type="CDD" id="cd00310">
    <property type="entry name" value="ATP-synt_Fo_a_6"/>
    <property type="match status" value="1"/>
</dbReference>
<dbReference type="FunFam" id="1.20.120.220:FF:000001">
    <property type="entry name" value="ATP synthase subunit a, chloroplastic"/>
    <property type="match status" value="1"/>
</dbReference>
<dbReference type="Gene3D" id="1.20.120.220">
    <property type="entry name" value="ATP synthase, F0 complex, subunit A"/>
    <property type="match status" value="1"/>
</dbReference>
<dbReference type="HAMAP" id="MF_01393">
    <property type="entry name" value="ATP_synth_a_bact"/>
    <property type="match status" value="1"/>
</dbReference>
<dbReference type="InterPro" id="IPR045082">
    <property type="entry name" value="ATP_syn_F0_a_bact/chloroplast"/>
</dbReference>
<dbReference type="InterPro" id="IPR000568">
    <property type="entry name" value="ATP_synth_F0_asu"/>
</dbReference>
<dbReference type="InterPro" id="IPR023011">
    <property type="entry name" value="ATP_synth_F0_asu_AS"/>
</dbReference>
<dbReference type="InterPro" id="IPR035908">
    <property type="entry name" value="F0_ATP_A_sf"/>
</dbReference>
<dbReference type="NCBIfam" id="TIGR01131">
    <property type="entry name" value="ATP_synt_6_or_A"/>
    <property type="match status" value="1"/>
</dbReference>
<dbReference type="PANTHER" id="PTHR42823">
    <property type="entry name" value="ATP SYNTHASE SUBUNIT A, CHLOROPLASTIC"/>
    <property type="match status" value="1"/>
</dbReference>
<dbReference type="PANTHER" id="PTHR42823:SF3">
    <property type="entry name" value="ATP SYNTHASE SUBUNIT A, CHLOROPLASTIC"/>
    <property type="match status" value="1"/>
</dbReference>
<dbReference type="Pfam" id="PF00119">
    <property type="entry name" value="ATP-synt_A"/>
    <property type="match status" value="1"/>
</dbReference>
<dbReference type="PRINTS" id="PR00123">
    <property type="entry name" value="ATPASEA"/>
</dbReference>
<dbReference type="SUPFAM" id="SSF81336">
    <property type="entry name" value="F1F0 ATP synthase subunit A"/>
    <property type="match status" value="1"/>
</dbReference>
<dbReference type="PROSITE" id="PS00449">
    <property type="entry name" value="ATPASE_A"/>
    <property type="match status" value="1"/>
</dbReference>
<feature type="chain" id="PRO_0000362584" description="ATP synthase subunit a, chloroplastic">
    <location>
        <begin position="1"/>
        <end position="249"/>
    </location>
</feature>
<feature type="transmembrane region" description="Helical" evidence="1">
    <location>
        <begin position="40"/>
        <end position="60"/>
    </location>
</feature>
<feature type="transmembrane region" description="Helical" evidence="1">
    <location>
        <begin position="97"/>
        <end position="117"/>
    </location>
</feature>
<feature type="transmembrane region" description="Helical" evidence="1">
    <location>
        <begin position="136"/>
        <end position="156"/>
    </location>
</feature>
<feature type="transmembrane region" description="Helical" evidence="1">
    <location>
        <begin position="201"/>
        <end position="221"/>
    </location>
</feature>
<feature type="transmembrane region" description="Helical" evidence="1">
    <location>
        <begin position="222"/>
        <end position="242"/>
    </location>
</feature>
<protein>
    <recommendedName>
        <fullName evidence="1">ATP synthase subunit a, chloroplastic</fullName>
    </recommendedName>
    <alternativeName>
        <fullName evidence="1">ATP synthase F0 sector subunit a</fullName>
    </alternativeName>
    <alternativeName>
        <fullName evidence="1">F-ATPase subunit IV</fullName>
    </alternativeName>
</protein>
<evidence type="ECO:0000255" key="1">
    <source>
        <dbReference type="HAMAP-Rule" id="MF_01393"/>
    </source>
</evidence>
<gene>
    <name evidence="1" type="primary">atpI</name>
</gene>
<accession>A4QJS1</accession>